<dbReference type="EC" id="1.6.5.2" evidence="8"/>
<dbReference type="EMBL" id="CP017630">
    <property type="protein sequence ID" value="AOW31261.1"/>
    <property type="molecule type" value="Genomic_DNA"/>
</dbReference>
<dbReference type="RefSeq" id="XP_710366.1">
    <property type="nucleotide sequence ID" value="XM_705274.1"/>
</dbReference>
<dbReference type="SMR" id="A0A1D8PT02"/>
<dbReference type="FunCoup" id="A0A1D8PT02">
    <property type="interactions" value="453"/>
</dbReference>
<dbReference type="STRING" id="237561.A0A1D8PT02"/>
<dbReference type="EnsemblFungi" id="CR_05390W_A-T">
    <property type="protein sequence ID" value="CR_05390W_A-T-p1"/>
    <property type="gene ID" value="CR_05390W_A"/>
</dbReference>
<dbReference type="GeneID" id="3648031"/>
<dbReference type="KEGG" id="cal:CAALFM_CR05390WA"/>
<dbReference type="CGD" id="CAL0000180388">
    <property type="gene designation" value="PST3"/>
</dbReference>
<dbReference type="VEuPathDB" id="FungiDB:CR_05390W_A"/>
<dbReference type="eggNOG" id="KOG3135">
    <property type="taxonomic scope" value="Eukaryota"/>
</dbReference>
<dbReference type="InParanoid" id="A0A1D8PT02"/>
<dbReference type="OMA" id="QAGGLWM"/>
<dbReference type="OrthoDB" id="504689at2759"/>
<dbReference type="Proteomes" id="UP000000559">
    <property type="component" value="Chromosome R"/>
</dbReference>
<dbReference type="GO" id="GO:0062040">
    <property type="term" value="C:fungal biofilm matrix"/>
    <property type="evidence" value="ECO:0000314"/>
    <property type="project" value="CGD"/>
</dbReference>
<dbReference type="GO" id="GO:0016020">
    <property type="term" value="C:membrane"/>
    <property type="evidence" value="ECO:0000318"/>
    <property type="project" value="GO_Central"/>
</dbReference>
<dbReference type="GO" id="GO:0005886">
    <property type="term" value="C:plasma membrane"/>
    <property type="evidence" value="ECO:0000314"/>
    <property type="project" value="CGD"/>
</dbReference>
<dbReference type="GO" id="GO:0010181">
    <property type="term" value="F:FMN binding"/>
    <property type="evidence" value="ECO:0007669"/>
    <property type="project" value="InterPro"/>
</dbReference>
<dbReference type="GO" id="GO:0003955">
    <property type="term" value="F:NAD(P)H dehydrogenase (quinone) activity"/>
    <property type="evidence" value="ECO:0000318"/>
    <property type="project" value="GO_Central"/>
</dbReference>
<dbReference type="GO" id="GO:0034599">
    <property type="term" value="P:cellular response to oxidative stress"/>
    <property type="evidence" value="ECO:0000316"/>
    <property type="project" value="CGD"/>
</dbReference>
<dbReference type="FunFam" id="3.40.50.360:FF:000001">
    <property type="entry name" value="NAD(P)H dehydrogenase (Quinone) FQR1-like"/>
    <property type="match status" value="1"/>
</dbReference>
<dbReference type="Gene3D" id="3.40.50.360">
    <property type="match status" value="1"/>
</dbReference>
<dbReference type="InterPro" id="IPR008254">
    <property type="entry name" value="Flavodoxin/NO_synth"/>
</dbReference>
<dbReference type="InterPro" id="IPR029039">
    <property type="entry name" value="Flavoprotein-like_sf"/>
</dbReference>
<dbReference type="InterPro" id="IPR010089">
    <property type="entry name" value="Flavoprotein_WrbA-like"/>
</dbReference>
<dbReference type="InterPro" id="IPR005025">
    <property type="entry name" value="FMN_Rdtase-like_dom"/>
</dbReference>
<dbReference type="NCBIfam" id="TIGR01755">
    <property type="entry name" value="flav_wrbA"/>
    <property type="match status" value="1"/>
</dbReference>
<dbReference type="NCBIfam" id="NF002999">
    <property type="entry name" value="PRK03767.1"/>
    <property type="match status" value="1"/>
</dbReference>
<dbReference type="PANTHER" id="PTHR30546">
    <property type="entry name" value="FLAVODOXIN-RELATED PROTEIN WRBA-RELATED"/>
    <property type="match status" value="1"/>
</dbReference>
<dbReference type="PANTHER" id="PTHR30546:SF23">
    <property type="entry name" value="FLAVOPROTEIN-LIKE PROTEIN YCP4-RELATED"/>
    <property type="match status" value="1"/>
</dbReference>
<dbReference type="Pfam" id="PF03358">
    <property type="entry name" value="FMN_red"/>
    <property type="match status" value="1"/>
</dbReference>
<dbReference type="SUPFAM" id="SSF52218">
    <property type="entry name" value="Flavoproteins"/>
    <property type="match status" value="1"/>
</dbReference>
<dbReference type="PROSITE" id="PS50902">
    <property type="entry name" value="FLAVODOXIN_LIKE"/>
    <property type="match status" value="1"/>
</dbReference>
<keyword id="KW-1003">Cell membrane</keyword>
<keyword id="KW-0285">Flavoprotein</keyword>
<keyword id="KW-0288">FMN</keyword>
<keyword id="KW-0472">Membrane</keyword>
<keyword id="KW-0520">NAD</keyword>
<keyword id="KW-0547">Nucleotide-binding</keyword>
<keyword id="KW-0560">Oxidoreductase</keyword>
<keyword id="KW-1185">Reference proteome</keyword>
<keyword id="KW-0843">Virulence</keyword>
<organism>
    <name type="scientific">Candida albicans (strain SC5314 / ATCC MYA-2876)</name>
    <name type="common">Yeast</name>
    <dbReference type="NCBI Taxonomy" id="237561"/>
    <lineage>
        <taxon>Eukaryota</taxon>
        <taxon>Fungi</taxon>
        <taxon>Dikarya</taxon>
        <taxon>Ascomycota</taxon>
        <taxon>Saccharomycotina</taxon>
        <taxon>Pichiomycetes</taxon>
        <taxon>Debaryomycetaceae</taxon>
        <taxon>Candida/Lodderomyces clade</taxon>
        <taxon>Candida</taxon>
    </lineage>
</organism>
<protein>
    <recommendedName>
        <fullName evidence="6">NAD(P)H quinone oxidoreductase PST3</fullName>
        <ecNumber evidence="8">1.6.5.2</ecNumber>
    </recommendedName>
    <alternativeName>
        <fullName evidence="6">Flavodoxin-like protein PST3</fullName>
        <shortName evidence="6">FLP PST3</shortName>
    </alternativeName>
</protein>
<proteinExistence type="evidence at transcript level"/>
<comment type="function">
    <text evidence="3 4">Flavodoxin-like protein (FLP) that plays a role in cell wall integrity, oxidative stress protection and virulence (PubMed:26087349, PubMed:26325183). FLPs act as NAD(P)H quinone oxidoreductases (PubMed:26325183). Reduces ubiquinone (coenzyme Q), enabling it to serve as an antioxidant in the membrane (PubMed:26325183).</text>
</comment>
<comment type="catalytic activity">
    <reaction evidence="8">
        <text>a quinone + NADH + H(+) = a quinol + NAD(+)</text>
        <dbReference type="Rhea" id="RHEA:46160"/>
        <dbReference type="ChEBI" id="CHEBI:15378"/>
        <dbReference type="ChEBI" id="CHEBI:24646"/>
        <dbReference type="ChEBI" id="CHEBI:57540"/>
        <dbReference type="ChEBI" id="CHEBI:57945"/>
        <dbReference type="ChEBI" id="CHEBI:132124"/>
        <dbReference type="EC" id="1.6.5.2"/>
    </reaction>
</comment>
<comment type="catalytic activity">
    <reaction evidence="8">
        <text>a quinone + NADPH + H(+) = a quinol + NADP(+)</text>
        <dbReference type="Rhea" id="RHEA:46164"/>
        <dbReference type="ChEBI" id="CHEBI:15378"/>
        <dbReference type="ChEBI" id="CHEBI:24646"/>
        <dbReference type="ChEBI" id="CHEBI:57783"/>
        <dbReference type="ChEBI" id="CHEBI:58349"/>
        <dbReference type="ChEBI" id="CHEBI:132124"/>
        <dbReference type="EC" id="1.6.5.2"/>
    </reaction>
</comment>
<comment type="cofactor">
    <cofactor evidence="1">
        <name>FMN</name>
        <dbReference type="ChEBI" id="CHEBI:58210"/>
    </cofactor>
</comment>
<comment type="subcellular location">
    <subcellularLocation>
        <location evidence="4">Cell membrane</location>
        <topology evidence="4">Peripheral membrane protein</topology>
    </subcellularLocation>
</comment>
<comment type="induction">
    <text evidence="2">Expression is up-regulated during stationary growth phase.</text>
</comment>
<comment type="disruption phenotype">
    <text evidence="3 4">Leads to sensitivity to both cell damaging agents calcofluor white and Congo red, as well as to thermosensitivity (PubMed:26087349, PubMed:26325183). Also increases the sensitivity to oxidative stress (PubMed:26087349). Causes significantly more damage to the host macrophages (PubMed:26087349). Quadruple mutant lacking all four FLPs (PST1, PST2, PST3 and YCP4) is more sensitive to benzoquinone and linolenic acid, a polyunsaturated fatty acid that can auto-oxidize and promote lipid peroxidation (PubMed:26325183). The quadruple mutant is also avirulent in a mouse model of systemic candidiasis (PubMed:26325183).</text>
</comment>
<comment type="similarity">
    <text evidence="7">Belongs to the WrbA family.</text>
</comment>
<accession>A0A1D8PT02</accession>
<feature type="chain" id="PRO_0000459478" description="NAD(P)H quinone oxidoreductase PST3">
    <location>
        <begin position="1"/>
        <end position="199"/>
    </location>
</feature>
<feature type="domain" description="Flavodoxin-like" evidence="1">
    <location>
        <begin position="5"/>
        <end position="193"/>
    </location>
</feature>
<feature type="binding site" evidence="1">
    <location>
        <begin position="11"/>
        <end position="15"/>
    </location>
    <ligand>
        <name>FMN</name>
        <dbReference type="ChEBI" id="CHEBI:58210"/>
    </ligand>
</feature>
<feature type="binding site" evidence="1">
    <location>
        <begin position="111"/>
        <end position="165"/>
    </location>
    <ligand>
        <name>FMN</name>
        <dbReference type="ChEBI" id="CHEBI:58210"/>
    </ligand>
</feature>
<reference key="1">
    <citation type="journal article" date="2004" name="Proc. Natl. Acad. Sci. U.S.A.">
        <title>The diploid genome sequence of Candida albicans.</title>
        <authorList>
            <person name="Jones T."/>
            <person name="Federspiel N.A."/>
            <person name="Chibana H."/>
            <person name="Dungan J."/>
            <person name="Kalman S."/>
            <person name="Magee B.B."/>
            <person name="Newport G."/>
            <person name="Thorstenson Y.R."/>
            <person name="Agabian N."/>
            <person name="Magee P.T."/>
            <person name="Davis R.W."/>
            <person name="Scherer S."/>
        </authorList>
    </citation>
    <scope>NUCLEOTIDE SEQUENCE [LARGE SCALE GENOMIC DNA]</scope>
    <source>
        <strain>SC5314 / ATCC MYA-2876</strain>
    </source>
</reference>
<reference key="2">
    <citation type="journal article" date="2007" name="Genome Biol.">
        <title>Assembly of the Candida albicans genome into sixteen supercontigs aligned on the eight chromosomes.</title>
        <authorList>
            <person name="van het Hoog M."/>
            <person name="Rast T.J."/>
            <person name="Martchenko M."/>
            <person name="Grindle S."/>
            <person name="Dignard D."/>
            <person name="Hogues H."/>
            <person name="Cuomo C."/>
            <person name="Berriman M."/>
            <person name="Scherer S."/>
            <person name="Magee B.B."/>
            <person name="Whiteway M."/>
            <person name="Chibana H."/>
            <person name="Nantel A."/>
            <person name="Magee P.T."/>
        </authorList>
    </citation>
    <scope>GENOME REANNOTATION</scope>
    <source>
        <strain>SC5314 / ATCC MYA-2876</strain>
    </source>
</reference>
<reference key="3">
    <citation type="journal article" date="2013" name="Genome Biol.">
        <title>Assembly of a phased diploid Candida albicans genome facilitates allele-specific measurements and provides a simple model for repeat and indel structure.</title>
        <authorList>
            <person name="Muzzey D."/>
            <person name="Schwartz K."/>
            <person name="Weissman J.S."/>
            <person name="Sherlock G."/>
        </authorList>
    </citation>
    <scope>NUCLEOTIDE SEQUENCE [LARGE SCALE GENOMIC DNA]</scope>
    <scope>GENOME REANNOTATION</scope>
    <source>
        <strain>SC5314 / ATCC MYA-2876</strain>
    </source>
</reference>
<reference key="4">
    <citation type="journal article" date="2008" name="Int. J. Med. Microbiol.">
        <title>A proteomic view of Candida albicans yeast cell metabolism in exponential and stationary growth phases.</title>
        <authorList>
            <person name="Kusch H."/>
            <person name="Engelmann S."/>
            <person name="Bode R."/>
            <person name="Albrecht D."/>
            <person name="Morschhauser J."/>
            <person name="Hecker M."/>
        </authorList>
    </citation>
    <scope>INDUCTION</scope>
</reference>
<reference key="5">
    <citation type="journal article" date="2015" name="J. Proteomics">
        <title>Candida albicans cell shaving uncovers new proteins involved in cell wall integrity, yeast to hypha transition, stress response and host-pathogen interaction.</title>
        <authorList>
            <person name="Gil-Bona A."/>
            <person name="Parra-Giraldo C.M."/>
            <person name="Hernaez M.L."/>
            <person name="Reales-Calderon J.A."/>
            <person name="Solis N.V."/>
            <person name="Filler S.G."/>
            <person name="Monteoliva L."/>
            <person name="Gil C."/>
        </authorList>
    </citation>
    <scope>FUNCTION</scope>
    <scope>DISRUPTION PHENOTYPE</scope>
</reference>
<reference key="6">
    <citation type="journal article" date="2015" name="PLoS Pathog.">
        <title>Flavodoxin-Like Proteins Protect Candida albicans from Oxidative Stress and Promote Virulence.</title>
        <authorList>
            <person name="Li L."/>
            <person name="Naseem S."/>
            <person name="Sharma S."/>
            <person name="Konopka J.B."/>
        </authorList>
    </citation>
    <scope>FUNCTION</scope>
    <scope>DISRUPTION PHENOTYPE</scope>
    <scope>SUBCELLULAR LOCATION</scope>
</reference>
<name>PST3_CANAL</name>
<sequence>MAPKVAIIIYSLYHHIAQLAEEEKKGIEAAGGVADIYQVPETLSDDVLKLLHAPAKPNYPIATNDTLTGYDAYLFGIPTRFGNYPAQFKAFWDATGGLWAQGALAGKQAGIFVSTSGQGGGQETTAVNALSVLVHHGIIFVPLGYAKAFPLQTNLEEIHGGSPYGAGTFAGVDGSRQPTKLEKEIAFIQGKSFYETVSK</sequence>
<evidence type="ECO:0000255" key="1">
    <source>
        <dbReference type="PROSITE-ProRule" id="PRU00088"/>
    </source>
</evidence>
<evidence type="ECO:0000269" key="2">
    <source>
    </source>
</evidence>
<evidence type="ECO:0000269" key="3">
    <source>
    </source>
</evidence>
<evidence type="ECO:0000269" key="4">
    <source>
    </source>
</evidence>
<evidence type="ECO:0000303" key="5">
    <source>
    </source>
</evidence>
<evidence type="ECO:0000303" key="6">
    <source>
    </source>
</evidence>
<evidence type="ECO:0000305" key="7"/>
<evidence type="ECO:0000305" key="8">
    <source>
    </source>
</evidence>
<gene>
    <name evidence="5" type="primary">PST3</name>
    <name type="ordered locus">CAALFM_CR05390WA</name>
    <name type="ordered locus">orf19.5285</name>
</gene>